<name>GRPE_STAHJ</name>
<feature type="chain" id="PRO_0000113863" description="Protein GrpE">
    <location>
        <begin position="1"/>
        <end position="208"/>
    </location>
</feature>
<feature type="region of interest" description="Disordered" evidence="2">
    <location>
        <begin position="1"/>
        <end position="62"/>
    </location>
</feature>
<feature type="compositionally biased region" description="Acidic residues" evidence="2">
    <location>
        <begin position="46"/>
        <end position="55"/>
    </location>
</feature>
<gene>
    <name evidence="1" type="primary">grpE</name>
    <name type="ordered locus">SH1335</name>
</gene>
<organism>
    <name type="scientific">Staphylococcus haemolyticus (strain JCSC1435)</name>
    <dbReference type="NCBI Taxonomy" id="279808"/>
    <lineage>
        <taxon>Bacteria</taxon>
        <taxon>Bacillati</taxon>
        <taxon>Bacillota</taxon>
        <taxon>Bacilli</taxon>
        <taxon>Bacillales</taxon>
        <taxon>Staphylococcaceae</taxon>
        <taxon>Staphylococcus</taxon>
    </lineage>
</organism>
<proteinExistence type="inferred from homology"/>
<accession>Q4L6T1</accession>
<sequence>MTEKDESVKSNSEYTEEQEVKNEDTSTVENVEDTTSDSDNSSNDSSNEESSEETAVDPKDEEIQQLQLKANENEEKYLRLYAEFENYKRRIQKENETNKTYQSQRVLTDILPTIDNIERALQIEGDDESFKSLQKGVQMVHESLLRALKDNGLEEIESEGQAFDPNFHQAVVQDDNPDFKSGDITQELQKGYKLKDRVLRPSMVKVNQ</sequence>
<comment type="function">
    <text evidence="1">Participates actively in the response to hyperosmotic and heat shock by preventing the aggregation of stress-denatured proteins, in association with DnaK and GrpE. It is the nucleotide exchange factor for DnaK and may function as a thermosensor. Unfolded proteins bind initially to DnaJ; upon interaction with the DnaJ-bound protein, DnaK hydrolyzes its bound ATP, resulting in the formation of a stable complex. GrpE releases ADP from DnaK; ATP binding to DnaK triggers the release of the substrate protein, thus completing the reaction cycle. Several rounds of ATP-dependent interactions between DnaJ, DnaK and GrpE are required for fully efficient folding.</text>
</comment>
<comment type="subunit">
    <text evidence="1">Homodimer.</text>
</comment>
<comment type="subcellular location">
    <subcellularLocation>
        <location evidence="1">Cytoplasm</location>
    </subcellularLocation>
</comment>
<comment type="similarity">
    <text evidence="1">Belongs to the GrpE family.</text>
</comment>
<keyword id="KW-0143">Chaperone</keyword>
<keyword id="KW-0963">Cytoplasm</keyword>
<keyword id="KW-0346">Stress response</keyword>
<dbReference type="EMBL" id="AP006716">
    <property type="protein sequence ID" value="BAE04644.1"/>
    <property type="molecule type" value="Genomic_DNA"/>
</dbReference>
<dbReference type="RefSeq" id="WP_011275632.1">
    <property type="nucleotide sequence ID" value="NC_007168.1"/>
</dbReference>
<dbReference type="SMR" id="Q4L6T1"/>
<dbReference type="GeneID" id="93780735"/>
<dbReference type="KEGG" id="sha:SH1335"/>
<dbReference type="eggNOG" id="COG0576">
    <property type="taxonomic scope" value="Bacteria"/>
</dbReference>
<dbReference type="HOGENOM" id="CLU_057217_0_2_9"/>
<dbReference type="OrthoDB" id="9812586at2"/>
<dbReference type="Proteomes" id="UP000000543">
    <property type="component" value="Chromosome"/>
</dbReference>
<dbReference type="GO" id="GO:0005737">
    <property type="term" value="C:cytoplasm"/>
    <property type="evidence" value="ECO:0007669"/>
    <property type="project" value="UniProtKB-SubCell"/>
</dbReference>
<dbReference type="GO" id="GO:0000774">
    <property type="term" value="F:adenyl-nucleotide exchange factor activity"/>
    <property type="evidence" value="ECO:0007669"/>
    <property type="project" value="InterPro"/>
</dbReference>
<dbReference type="GO" id="GO:0042803">
    <property type="term" value="F:protein homodimerization activity"/>
    <property type="evidence" value="ECO:0007669"/>
    <property type="project" value="InterPro"/>
</dbReference>
<dbReference type="GO" id="GO:0051087">
    <property type="term" value="F:protein-folding chaperone binding"/>
    <property type="evidence" value="ECO:0007669"/>
    <property type="project" value="InterPro"/>
</dbReference>
<dbReference type="GO" id="GO:0051082">
    <property type="term" value="F:unfolded protein binding"/>
    <property type="evidence" value="ECO:0007669"/>
    <property type="project" value="TreeGrafter"/>
</dbReference>
<dbReference type="GO" id="GO:0006457">
    <property type="term" value="P:protein folding"/>
    <property type="evidence" value="ECO:0007669"/>
    <property type="project" value="InterPro"/>
</dbReference>
<dbReference type="CDD" id="cd00446">
    <property type="entry name" value="GrpE"/>
    <property type="match status" value="1"/>
</dbReference>
<dbReference type="FunFam" id="2.30.22.10:FF:000001">
    <property type="entry name" value="Protein GrpE"/>
    <property type="match status" value="1"/>
</dbReference>
<dbReference type="FunFam" id="3.90.20.20:FF:000002">
    <property type="entry name" value="Protein GrpE"/>
    <property type="match status" value="1"/>
</dbReference>
<dbReference type="Gene3D" id="3.90.20.20">
    <property type="match status" value="1"/>
</dbReference>
<dbReference type="Gene3D" id="2.30.22.10">
    <property type="entry name" value="Head domain of nucleotide exchange factor GrpE"/>
    <property type="match status" value="1"/>
</dbReference>
<dbReference type="HAMAP" id="MF_01151">
    <property type="entry name" value="GrpE"/>
    <property type="match status" value="1"/>
</dbReference>
<dbReference type="InterPro" id="IPR000740">
    <property type="entry name" value="GrpE"/>
</dbReference>
<dbReference type="InterPro" id="IPR013805">
    <property type="entry name" value="GrpE_coiled_coil"/>
</dbReference>
<dbReference type="InterPro" id="IPR009012">
    <property type="entry name" value="GrpE_head"/>
</dbReference>
<dbReference type="NCBIfam" id="NF010738">
    <property type="entry name" value="PRK14140.1"/>
    <property type="match status" value="1"/>
</dbReference>
<dbReference type="PANTHER" id="PTHR21237">
    <property type="entry name" value="GRPE PROTEIN"/>
    <property type="match status" value="1"/>
</dbReference>
<dbReference type="PANTHER" id="PTHR21237:SF23">
    <property type="entry name" value="GRPE PROTEIN HOMOLOG, MITOCHONDRIAL"/>
    <property type="match status" value="1"/>
</dbReference>
<dbReference type="Pfam" id="PF01025">
    <property type="entry name" value="GrpE"/>
    <property type="match status" value="1"/>
</dbReference>
<dbReference type="PRINTS" id="PR00773">
    <property type="entry name" value="GRPEPROTEIN"/>
</dbReference>
<dbReference type="SUPFAM" id="SSF58014">
    <property type="entry name" value="Coiled-coil domain of nucleotide exchange factor GrpE"/>
    <property type="match status" value="1"/>
</dbReference>
<dbReference type="SUPFAM" id="SSF51064">
    <property type="entry name" value="Head domain of nucleotide exchange factor GrpE"/>
    <property type="match status" value="1"/>
</dbReference>
<dbReference type="PROSITE" id="PS01071">
    <property type="entry name" value="GRPE"/>
    <property type="match status" value="1"/>
</dbReference>
<evidence type="ECO:0000255" key="1">
    <source>
        <dbReference type="HAMAP-Rule" id="MF_01151"/>
    </source>
</evidence>
<evidence type="ECO:0000256" key="2">
    <source>
        <dbReference type="SAM" id="MobiDB-lite"/>
    </source>
</evidence>
<protein>
    <recommendedName>
        <fullName evidence="1">Protein GrpE</fullName>
    </recommendedName>
    <alternativeName>
        <fullName evidence="1">HSP-70 cofactor</fullName>
    </alternativeName>
</protein>
<reference key="1">
    <citation type="journal article" date="2005" name="J. Bacteriol.">
        <title>Whole-genome sequencing of Staphylococcus haemolyticus uncovers the extreme plasticity of its genome and the evolution of human-colonizing staphylococcal species.</title>
        <authorList>
            <person name="Takeuchi F."/>
            <person name="Watanabe S."/>
            <person name="Baba T."/>
            <person name="Yuzawa H."/>
            <person name="Ito T."/>
            <person name="Morimoto Y."/>
            <person name="Kuroda M."/>
            <person name="Cui L."/>
            <person name="Takahashi M."/>
            <person name="Ankai A."/>
            <person name="Baba S."/>
            <person name="Fukui S."/>
            <person name="Lee J.C."/>
            <person name="Hiramatsu K."/>
        </authorList>
    </citation>
    <scope>NUCLEOTIDE SEQUENCE [LARGE SCALE GENOMIC DNA]</scope>
    <source>
        <strain>JCSC1435</strain>
    </source>
</reference>